<accession>Q7KF89</accession>
<evidence type="ECO:0000256" key="1">
    <source>
        <dbReference type="SAM" id="MobiDB-lite"/>
    </source>
</evidence>
<evidence type="ECO:0000305" key="2"/>
<evidence type="ECO:0000305" key="3">
    <source ref="2"/>
</evidence>
<comment type="subunit">
    <text evidence="3">Component of the small ribosomal subunit (Ref.2).</text>
</comment>
<comment type="miscellaneous">
    <text evidence="3">Initially thought to be part of the large ribosomal subunit. Crystal structures show eS32/eL41 to be a small ribosomal subunit forming a bridge at the interface of the 2 subunits.</text>
</comment>
<comment type="similarity">
    <text evidence="2">Belongs to the eukaryotic ribosomal protein eS32 family.</text>
</comment>
<feature type="chain" id="PRO_0000198062" description="Small ribosomal subunit protein eS32">
    <location>
        <begin position="1"/>
        <end position="25"/>
    </location>
</feature>
<feature type="region of interest" description="Disordered" evidence="1">
    <location>
        <begin position="1"/>
        <end position="25"/>
    </location>
</feature>
<reference key="1">
    <citation type="journal article" date="2003" name="Bioinformatics">
        <title>Annotation pattern of ESTs from Spodoptera frugiperda Sf9 cells and analysis of the ribosomal protein genes reveal insect-specific features and unexpectedly low codon usage bias.</title>
        <authorList>
            <person name="Landais I."/>
            <person name="Ogliastro M."/>
            <person name="Mita K."/>
            <person name="Nohata J."/>
            <person name="Lopez-Ferber M."/>
            <person name="Duonor-Cerutti M."/>
            <person name="Shimada T."/>
            <person name="Fournier P."/>
            <person name="Devauchelle G."/>
        </authorList>
    </citation>
    <scope>NUCLEOTIDE SEQUENCE [LARGE SCALE MRNA]</scope>
</reference>
<reference key="2">
    <citation type="unpublished observations" date="2023-10">
        <authorList>
            <person name="Leibundgut M.A."/>
            <person name="Ban N."/>
        </authorList>
    </citation>
    <scope>REVISION OF SUBUNIT</scope>
    <scope>NOMENCLATURE</scope>
</reference>
<organism>
    <name type="scientific">Spodoptera frugiperda</name>
    <name type="common">Fall armyworm</name>
    <dbReference type="NCBI Taxonomy" id="7108"/>
    <lineage>
        <taxon>Eukaryota</taxon>
        <taxon>Metazoa</taxon>
        <taxon>Ecdysozoa</taxon>
        <taxon>Arthropoda</taxon>
        <taxon>Hexapoda</taxon>
        <taxon>Insecta</taxon>
        <taxon>Pterygota</taxon>
        <taxon>Neoptera</taxon>
        <taxon>Endopterygota</taxon>
        <taxon>Lepidoptera</taxon>
        <taxon>Glossata</taxon>
        <taxon>Ditrysia</taxon>
        <taxon>Noctuoidea</taxon>
        <taxon>Noctuidae</taxon>
        <taxon>Amphipyrinae</taxon>
        <taxon>Spodoptera</taxon>
    </lineage>
</organism>
<keyword id="KW-0687">Ribonucleoprotein</keyword>
<keyword id="KW-0689">Ribosomal protein</keyword>
<proteinExistence type="evidence at protein level"/>
<dbReference type="EMBL" id="AF400204">
    <property type="protein sequence ID" value="AAK92176.1"/>
    <property type="molecule type" value="mRNA"/>
</dbReference>
<dbReference type="SMR" id="Q7KF89"/>
<dbReference type="Proteomes" id="UP000829999">
    <property type="component" value="Unplaced"/>
</dbReference>
<dbReference type="GO" id="GO:1990904">
    <property type="term" value="C:ribonucleoprotein complex"/>
    <property type="evidence" value="ECO:0007669"/>
    <property type="project" value="UniProtKB-KW"/>
</dbReference>
<dbReference type="GO" id="GO:0005840">
    <property type="term" value="C:ribosome"/>
    <property type="evidence" value="ECO:0007669"/>
    <property type="project" value="UniProtKB-KW"/>
</dbReference>
<dbReference type="GO" id="GO:0003735">
    <property type="term" value="F:structural constituent of ribosome"/>
    <property type="evidence" value="ECO:0007669"/>
    <property type="project" value="InterPro"/>
</dbReference>
<dbReference type="GO" id="GO:0006412">
    <property type="term" value="P:translation"/>
    <property type="evidence" value="ECO:0007669"/>
    <property type="project" value="InterPro"/>
</dbReference>
<dbReference type="InterPro" id="IPR007836">
    <property type="entry name" value="Ribosomal_eS32"/>
</dbReference>
<dbReference type="Pfam" id="PF05162">
    <property type="entry name" value="Ribosomal_L41"/>
    <property type="match status" value="1"/>
</dbReference>
<name>RS32_SPOFR</name>
<gene>
    <name type="primary">RpL41</name>
</gene>
<protein>
    <recommendedName>
        <fullName evidence="3">Small ribosomal subunit protein eS32</fullName>
    </recommendedName>
    <alternativeName>
        <fullName>60S ribosomal protein L41</fullName>
    </alternativeName>
    <alternativeName>
        <fullName evidence="2">Large ribosomal subunit protein eL41</fullName>
    </alternativeName>
</protein>
<sequence length="25" mass="3399">MRAKWRKKRMRRLKRKRRKMRARSK</sequence>